<protein>
    <recommendedName>
        <fullName evidence="2">Translation initiation factor 2 subunit gamma</fullName>
        <ecNumber evidence="2">3.6.5.3</ecNumber>
    </recommendedName>
    <alternativeName>
        <fullName evidence="2">aIF2-gamma</fullName>
    </alternativeName>
    <alternativeName>
        <fullName evidence="2">eIF-2-gamma</fullName>
    </alternativeName>
</protein>
<gene>
    <name evidence="2" type="primary">eif2g</name>
    <name type="ordered locus">MJ1261</name>
</gene>
<sequence length="411" mass="44596">MAKKKQAKQAEVNIGMVGHVDHGKTSLTKALTGVWTDRHSEELRRGISIRLGYADCEIRKCPQCGTYTTKPRCPNCLAETEFLRRVSFVDSPGHETLMATMLSGASLMDGAILVIAANEPCPQPQTKEHLMALEILGIDKIIIVQNKIDLVDEKQAEENYEQIKEFVKGTIAENAPIIPISAHHEANIDVLLKAIQDFIPTPKRDPDATPRMYVARSFDINKPGTEIKDLKGGVLGGAIIQGVFKVGDEIEIRPGIKVTEGNKTFWKPLTTKIVSLAAGNTILRKAHPGGLIGVGTTLDPYLTKSDALTGSVVGLPGTLPPIREKITIRANLLDRVVGTKEELKIEPLRTGEVLMLNIGTATTAGVITSARGDIADIKLKLPICAEIGDRVAISRRVGSRWRLIGYGTIEG</sequence>
<comment type="function">
    <text evidence="2">eIF-2 functions in the early steps of protein synthesis by forming a ternary complex with GTP and initiator tRNA.</text>
</comment>
<comment type="catalytic activity">
    <reaction evidence="2">
        <text>GTP + H2O = GDP + phosphate + H(+)</text>
        <dbReference type="Rhea" id="RHEA:19669"/>
        <dbReference type="ChEBI" id="CHEBI:15377"/>
        <dbReference type="ChEBI" id="CHEBI:15378"/>
        <dbReference type="ChEBI" id="CHEBI:37565"/>
        <dbReference type="ChEBI" id="CHEBI:43474"/>
        <dbReference type="ChEBI" id="CHEBI:58189"/>
        <dbReference type="EC" id="3.6.5.3"/>
    </reaction>
</comment>
<comment type="cofactor">
    <cofactor evidence="1 2">
        <name>Mg(2+)</name>
        <dbReference type="ChEBI" id="CHEBI:18420"/>
    </cofactor>
</comment>
<comment type="subunit">
    <text evidence="2">Heterotrimer composed of an alpha, a beta and a gamma chain.</text>
</comment>
<comment type="similarity">
    <text evidence="2 4">Belongs to the TRAFAC class translation factor GTPase superfamily. Classic translation factor GTPase family. EIF2G subfamily.</text>
</comment>
<reference key="1">
    <citation type="journal article" date="1996" name="Science">
        <title>Complete genome sequence of the methanogenic archaeon, Methanococcus jannaschii.</title>
        <authorList>
            <person name="Bult C.J."/>
            <person name="White O."/>
            <person name="Olsen G.J."/>
            <person name="Zhou L."/>
            <person name="Fleischmann R.D."/>
            <person name="Sutton G.G."/>
            <person name="Blake J.A."/>
            <person name="FitzGerald L.M."/>
            <person name="Clayton R.A."/>
            <person name="Gocayne J.D."/>
            <person name="Kerlavage A.R."/>
            <person name="Dougherty B.A."/>
            <person name="Tomb J.-F."/>
            <person name="Adams M.D."/>
            <person name="Reich C.I."/>
            <person name="Overbeek R."/>
            <person name="Kirkness E.F."/>
            <person name="Weinstock K.G."/>
            <person name="Merrick J.M."/>
            <person name="Glodek A."/>
            <person name="Scott J.L."/>
            <person name="Geoghagen N.S.M."/>
            <person name="Weidman J.F."/>
            <person name="Fuhrmann J.L."/>
            <person name="Nguyen D."/>
            <person name="Utterback T.R."/>
            <person name="Kelley J.M."/>
            <person name="Peterson J.D."/>
            <person name="Sadow P.W."/>
            <person name="Hanna M.C."/>
            <person name="Cotton M.D."/>
            <person name="Roberts K.M."/>
            <person name="Hurst M.A."/>
            <person name="Kaine B.P."/>
            <person name="Borodovsky M."/>
            <person name="Klenk H.-P."/>
            <person name="Fraser C.M."/>
            <person name="Smith H.O."/>
            <person name="Woese C.R."/>
            <person name="Venter J.C."/>
        </authorList>
    </citation>
    <scope>NUCLEOTIDE SEQUENCE [LARGE SCALE GENOMIC DNA]</scope>
    <source>
        <strain>ATCC 43067 / DSM 2661 / JAL-1 / JCM 10045 / NBRC 100440</strain>
    </source>
</reference>
<reference key="2">
    <citation type="journal article" date="2004" name="J. Biol. Chem.">
        <title>X-ray structure of translation initiation factor eIF2gamma: implications for tRNA and eIF2alpha binding.</title>
        <authorList>
            <person name="Roll-Mecak A."/>
            <person name="Alone P."/>
            <person name="Cao C."/>
            <person name="Dever T.E."/>
            <person name="Burley S.K."/>
        </authorList>
    </citation>
    <scope>X-RAY CRYSTALLOGRAPHY (2.4 ANGSTROMS) OF 9-411 IN COMPLEX WITH ZINC</scope>
</reference>
<name>IF2G_METJA</name>
<feature type="chain" id="PRO_0000137454" description="Translation initiation factor 2 subunit gamma">
    <location>
        <begin position="1"/>
        <end position="411"/>
    </location>
</feature>
<feature type="domain" description="tr-type G" evidence="2">
    <location>
        <begin position="9"/>
        <end position="203"/>
    </location>
</feature>
<feature type="region of interest" description="G1" evidence="2">
    <location>
        <begin position="18"/>
        <end position="25"/>
    </location>
</feature>
<feature type="region of interest" description="G2" evidence="2">
    <location>
        <begin position="46"/>
        <end position="50"/>
    </location>
</feature>
<feature type="region of interest" description="G3" evidence="2">
    <location>
        <begin position="90"/>
        <end position="93"/>
    </location>
</feature>
<feature type="region of interest" description="G4" evidence="2">
    <location>
        <begin position="146"/>
        <end position="149"/>
    </location>
</feature>
<feature type="region of interest" description="G5" evidence="2">
    <location>
        <begin position="181"/>
        <end position="183"/>
    </location>
</feature>
<feature type="binding site" evidence="1 2">
    <location>
        <begin position="21"/>
        <end position="26"/>
    </location>
    <ligand>
        <name>GTP</name>
        <dbReference type="ChEBI" id="CHEBI:37565"/>
    </ligand>
</feature>
<feature type="binding site" evidence="1 2">
    <location>
        <position position="21"/>
    </location>
    <ligand>
        <name>Mg(2+)</name>
        <dbReference type="ChEBI" id="CHEBI:18420"/>
        <label>2</label>
    </ligand>
</feature>
<feature type="binding site" evidence="1 2">
    <location>
        <position position="25"/>
    </location>
    <ligand>
        <name>Mg(2+)</name>
        <dbReference type="ChEBI" id="CHEBI:18420"/>
        <label>1</label>
    </ligand>
</feature>
<feature type="binding site" evidence="1 2">
    <location>
        <position position="46"/>
    </location>
    <ligand>
        <name>Mg(2+)</name>
        <dbReference type="ChEBI" id="CHEBI:18420"/>
        <label>2</label>
    </ligand>
</feature>
<feature type="binding site" evidence="1 2">
    <location>
        <position position="48"/>
    </location>
    <ligand>
        <name>Mg(2+)</name>
        <dbReference type="ChEBI" id="CHEBI:18420"/>
        <label>1</label>
    </ligand>
</feature>
<feature type="binding site" evidence="2 3 5">
    <location>
        <position position="61"/>
    </location>
    <ligand>
        <name>Zn(2+)</name>
        <dbReference type="ChEBI" id="CHEBI:29105"/>
    </ligand>
</feature>
<feature type="binding site" evidence="2 3 5">
    <location>
        <position position="64"/>
    </location>
    <ligand>
        <name>Zn(2+)</name>
        <dbReference type="ChEBI" id="CHEBI:29105"/>
    </ligand>
</feature>
<feature type="binding site" evidence="2 3 5">
    <location>
        <position position="73"/>
    </location>
    <ligand>
        <name>Zn(2+)</name>
        <dbReference type="ChEBI" id="CHEBI:29105"/>
    </ligand>
</feature>
<feature type="binding site" evidence="2 3 5">
    <location>
        <position position="76"/>
    </location>
    <ligand>
        <name>Zn(2+)</name>
        <dbReference type="ChEBI" id="CHEBI:29105"/>
    </ligand>
</feature>
<feature type="binding site" evidence="1 2">
    <location>
        <begin position="146"/>
        <end position="149"/>
    </location>
    <ligand>
        <name>GTP</name>
        <dbReference type="ChEBI" id="CHEBI:37565"/>
    </ligand>
</feature>
<feature type="binding site" evidence="1 2">
    <location>
        <begin position="181"/>
        <end position="183"/>
    </location>
    <ligand>
        <name>GTP</name>
        <dbReference type="ChEBI" id="CHEBI:37565"/>
    </ligand>
</feature>
<feature type="strand" evidence="6">
    <location>
        <begin position="12"/>
        <end position="18"/>
    </location>
</feature>
<feature type="helix" evidence="6">
    <location>
        <begin position="24"/>
        <end position="32"/>
    </location>
</feature>
<feature type="strand" evidence="6">
    <location>
        <begin position="52"/>
        <end position="60"/>
    </location>
</feature>
<feature type="turn" evidence="6">
    <location>
        <begin position="62"/>
        <end position="64"/>
    </location>
</feature>
<feature type="strand" evidence="6">
    <location>
        <begin position="67"/>
        <end position="72"/>
    </location>
</feature>
<feature type="strand" evidence="6">
    <location>
        <begin position="81"/>
        <end position="90"/>
    </location>
</feature>
<feature type="helix" evidence="6">
    <location>
        <begin position="94"/>
        <end position="102"/>
    </location>
</feature>
<feature type="strand" evidence="6">
    <location>
        <begin position="109"/>
        <end position="116"/>
    </location>
</feature>
<feature type="helix" evidence="6">
    <location>
        <begin position="124"/>
        <end position="135"/>
    </location>
</feature>
<feature type="strand" evidence="6">
    <location>
        <begin position="141"/>
        <end position="146"/>
    </location>
</feature>
<feature type="turn" evidence="6">
    <location>
        <begin position="153"/>
        <end position="158"/>
    </location>
</feature>
<feature type="helix" evidence="6">
    <location>
        <begin position="159"/>
        <end position="167"/>
    </location>
</feature>
<feature type="turn" evidence="6">
    <location>
        <begin position="171"/>
        <end position="174"/>
    </location>
</feature>
<feature type="strand" evidence="6">
    <location>
        <begin position="177"/>
        <end position="179"/>
    </location>
</feature>
<feature type="helix" evidence="6">
    <location>
        <begin position="188"/>
        <end position="198"/>
    </location>
</feature>
<feature type="strand" evidence="6">
    <location>
        <begin position="211"/>
        <end position="218"/>
    </location>
</feature>
<feature type="helix" evidence="6">
    <location>
        <begin position="227"/>
        <end position="229"/>
    </location>
</feature>
<feature type="strand" evidence="6">
    <location>
        <begin position="234"/>
        <end position="242"/>
    </location>
</feature>
<feature type="strand" evidence="6">
    <location>
        <begin position="249"/>
        <end position="258"/>
    </location>
</feature>
<feature type="strand" evidence="6">
    <location>
        <begin position="265"/>
        <end position="272"/>
    </location>
</feature>
<feature type="strand" evidence="6">
    <location>
        <begin position="275"/>
        <end position="278"/>
    </location>
</feature>
<feature type="strand" evidence="6">
    <location>
        <begin position="281"/>
        <end position="286"/>
    </location>
</feature>
<feature type="strand" evidence="6">
    <location>
        <begin position="288"/>
        <end position="290"/>
    </location>
</feature>
<feature type="strand" evidence="6">
    <location>
        <begin position="292"/>
        <end position="295"/>
    </location>
</feature>
<feature type="helix" evidence="6">
    <location>
        <begin position="300"/>
        <end position="302"/>
    </location>
</feature>
<feature type="helix" evidence="6">
    <location>
        <begin position="304"/>
        <end position="306"/>
    </location>
</feature>
<feature type="turn" evidence="6">
    <location>
        <begin position="307"/>
        <end position="310"/>
    </location>
</feature>
<feature type="strand" evidence="6">
    <location>
        <begin position="312"/>
        <end position="315"/>
    </location>
</feature>
<feature type="strand" evidence="6">
    <location>
        <begin position="322"/>
        <end position="332"/>
    </location>
</feature>
<feature type="strand" evidence="6">
    <location>
        <begin position="353"/>
        <end position="358"/>
    </location>
</feature>
<feature type="strand" evidence="6">
    <location>
        <begin position="361"/>
        <end position="371"/>
    </location>
</feature>
<feature type="strand" evidence="6">
    <location>
        <begin position="374"/>
        <end position="384"/>
    </location>
</feature>
<feature type="strand" evidence="6">
    <location>
        <begin position="390"/>
        <end position="396"/>
    </location>
</feature>
<feature type="strand" evidence="6">
    <location>
        <begin position="398"/>
        <end position="411"/>
    </location>
</feature>
<dbReference type="EC" id="3.6.5.3" evidence="2"/>
<dbReference type="EMBL" id="L77117">
    <property type="protein sequence ID" value="AAB99264.1"/>
    <property type="molecule type" value="Genomic_DNA"/>
</dbReference>
<dbReference type="PIR" id="D64457">
    <property type="entry name" value="D64457"/>
</dbReference>
<dbReference type="RefSeq" id="WP_064496772.1">
    <property type="nucleotide sequence ID" value="NC_000909.1"/>
</dbReference>
<dbReference type="PDB" id="1S0U">
    <property type="method" value="X-ray"/>
    <property type="resolution" value="2.40 A"/>
    <property type="chains" value="A=9-411"/>
</dbReference>
<dbReference type="PDBsum" id="1S0U"/>
<dbReference type="SMR" id="Q58657"/>
<dbReference type="FunCoup" id="Q58657">
    <property type="interactions" value="191"/>
</dbReference>
<dbReference type="STRING" id="243232.MJ_1261"/>
<dbReference type="PaxDb" id="243232-MJ_1261"/>
<dbReference type="EnsemblBacteria" id="AAB99264">
    <property type="protein sequence ID" value="AAB99264"/>
    <property type="gene ID" value="MJ_1261"/>
</dbReference>
<dbReference type="GeneID" id="1452159"/>
<dbReference type="KEGG" id="mja:MJ_1261"/>
<dbReference type="eggNOG" id="arCOG01563">
    <property type="taxonomic scope" value="Archaea"/>
</dbReference>
<dbReference type="HOGENOM" id="CLU_027154_0_1_2"/>
<dbReference type="InParanoid" id="Q58657"/>
<dbReference type="OrthoDB" id="7798at2157"/>
<dbReference type="PhylomeDB" id="Q58657"/>
<dbReference type="EvolutionaryTrace" id="Q58657"/>
<dbReference type="Proteomes" id="UP000000805">
    <property type="component" value="Chromosome"/>
</dbReference>
<dbReference type="GO" id="GO:0005525">
    <property type="term" value="F:GTP binding"/>
    <property type="evidence" value="ECO:0007669"/>
    <property type="project" value="UniProtKB-UniRule"/>
</dbReference>
<dbReference type="GO" id="GO:0003924">
    <property type="term" value="F:GTPase activity"/>
    <property type="evidence" value="ECO:0007669"/>
    <property type="project" value="InterPro"/>
</dbReference>
<dbReference type="GO" id="GO:0046872">
    <property type="term" value="F:metal ion binding"/>
    <property type="evidence" value="ECO:0007669"/>
    <property type="project" value="UniProtKB-KW"/>
</dbReference>
<dbReference type="GO" id="GO:0003746">
    <property type="term" value="F:translation elongation factor activity"/>
    <property type="evidence" value="ECO:0007669"/>
    <property type="project" value="UniProtKB-UniRule"/>
</dbReference>
<dbReference type="GO" id="GO:0003743">
    <property type="term" value="F:translation initiation factor activity"/>
    <property type="evidence" value="ECO:0000318"/>
    <property type="project" value="GO_Central"/>
</dbReference>
<dbReference type="GO" id="GO:0000049">
    <property type="term" value="F:tRNA binding"/>
    <property type="evidence" value="ECO:0007669"/>
    <property type="project" value="InterPro"/>
</dbReference>
<dbReference type="GO" id="GO:0001731">
    <property type="term" value="P:formation of translation preinitiation complex"/>
    <property type="evidence" value="ECO:0000318"/>
    <property type="project" value="GO_Central"/>
</dbReference>
<dbReference type="CDD" id="cd01888">
    <property type="entry name" value="eIF2_gamma"/>
    <property type="match status" value="1"/>
</dbReference>
<dbReference type="CDD" id="cd03688">
    <property type="entry name" value="eIF2_gamma_II"/>
    <property type="match status" value="1"/>
</dbReference>
<dbReference type="CDD" id="cd15490">
    <property type="entry name" value="eIF2_gamma_III"/>
    <property type="match status" value="1"/>
</dbReference>
<dbReference type="FunFam" id="2.40.30.10:FF:000009">
    <property type="entry name" value="Eukaryotic translation initiation factor 2 subunit gamma"/>
    <property type="match status" value="1"/>
</dbReference>
<dbReference type="FunFam" id="3.40.50.300:FF:000065">
    <property type="entry name" value="Eukaryotic translation initiation factor 2 subunit gamma"/>
    <property type="match status" value="1"/>
</dbReference>
<dbReference type="FunFam" id="2.40.30.10:FF:000075">
    <property type="entry name" value="Translation initiation factor 2 subunit gamma"/>
    <property type="match status" value="1"/>
</dbReference>
<dbReference type="Gene3D" id="3.40.50.300">
    <property type="entry name" value="P-loop containing nucleotide triphosphate hydrolases"/>
    <property type="match status" value="1"/>
</dbReference>
<dbReference type="Gene3D" id="2.40.30.10">
    <property type="entry name" value="Translation factors"/>
    <property type="match status" value="2"/>
</dbReference>
<dbReference type="HAMAP" id="MF_00119">
    <property type="entry name" value="eIF_2_gamma"/>
    <property type="match status" value="1"/>
</dbReference>
<dbReference type="InterPro" id="IPR050543">
    <property type="entry name" value="eIF2G"/>
</dbReference>
<dbReference type="InterPro" id="IPR015256">
    <property type="entry name" value="eIF2g_C"/>
</dbReference>
<dbReference type="InterPro" id="IPR044127">
    <property type="entry name" value="eIF2g_dom_2"/>
</dbReference>
<dbReference type="InterPro" id="IPR044128">
    <property type="entry name" value="eIF2g_GTP-bd"/>
</dbReference>
<dbReference type="InterPro" id="IPR027417">
    <property type="entry name" value="P-loop_NTPase"/>
</dbReference>
<dbReference type="InterPro" id="IPR005225">
    <property type="entry name" value="Small_GTP-bd"/>
</dbReference>
<dbReference type="InterPro" id="IPR000795">
    <property type="entry name" value="T_Tr_GTP-bd_dom"/>
</dbReference>
<dbReference type="InterPro" id="IPR022424">
    <property type="entry name" value="TIF2_gsu"/>
</dbReference>
<dbReference type="InterPro" id="IPR009000">
    <property type="entry name" value="Transl_B-barrel_sf"/>
</dbReference>
<dbReference type="InterPro" id="IPR009001">
    <property type="entry name" value="Transl_elong_EF1A/Init_IF2_C"/>
</dbReference>
<dbReference type="NCBIfam" id="TIGR03680">
    <property type="entry name" value="eif2g_arch"/>
    <property type="match status" value="1"/>
</dbReference>
<dbReference type="NCBIfam" id="NF003077">
    <property type="entry name" value="PRK04000.1"/>
    <property type="match status" value="1"/>
</dbReference>
<dbReference type="NCBIfam" id="TIGR00231">
    <property type="entry name" value="small_GTP"/>
    <property type="match status" value="1"/>
</dbReference>
<dbReference type="PANTHER" id="PTHR42854">
    <property type="entry name" value="EUKARYOTIC TRANSLATION INITIATION FACTOR 2 SUBUNIT 3 FAMILY MEMBER"/>
    <property type="match status" value="1"/>
</dbReference>
<dbReference type="PANTHER" id="PTHR42854:SF3">
    <property type="entry name" value="EUKARYOTIC TRANSLATION INITIATION FACTOR 2 SUBUNIT 3-RELATED"/>
    <property type="match status" value="1"/>
</dbReference>
<dbReference type="Pfam" id="PF09173">
    <property type="entry name" value="eIF2_C"/>
    <property type="match status" value="1"/>
</dbReference>
<dbReference type="Pfam" id="PF00009">
    <property type="entry name" value="GTP_EFTU"/>
    <property type="match status" value="1"/>
</dbReference>
<dbReference type="PRINTS" id="PR00315">
    <property type="entry name" value="ELONGATNFCT"/>
</dbReference>
<dbReference type="SUPFAM" id="SSF50465">
    <property type="entry name" value="EF-Tu/eEF-1alpha/eIF2-gamma C-terminal domain"/>
    <property type="match status" value="1"/>
</dbReference>
<dbReference type="SUPFAM" id="SSF52540">
    <property type="entry name" value="P-loop containing nucleoside triphosphate hydrolases"/>
    <property type="match status" value="1"/>
</dbReference>
<dbReference type="SUPFAM" id="SSF50447">
    <property type="entry name" value="Translation proteins"/>
    <property type="match status" value="1"/>
</dbReference>
<dbReference type="PROSITE" id="PS51722">
    <property type="entry name" value="G_TR_2"/>
    <property type="match status" value="1"/>
</dbReference>
<accession>Q58657</accession>
<organism>
    <name type="scientific">Methanocaldococcus jannaschii (strain ATCC 43067 / DSM 2661 / JAL-1 / JCM 10045 / NBRC 100440)</name>
    <name type="common">Methanococcus jannaschii</name>
    <dbReference type="NCBI Taxonomy" id="243232"/>
    <lineage>
        <taxon>Archaea</taxon>
        <taxon>Methanobacteriati</taxon>
        <taxon>Methanobacteriota</taxon>
        <taxon>Methanomada group</taxon>
        <taxon>Methanococci</taxon>
        <taxon>Methanococcales</taxon>
        <taxon>Methanocaldococcaceae</taxon>
        <taxon>Methanocaldococcus</taxon>
    </lineage>
</organism>
<keyword id="KW-0002">3D-structure</keyword>
<keyword id="KW-0342">GTP-binding</keyword>
<keyword id="KW-0378">Hydrolase</keyword>
<keyword id="KW-0396">Initiation factor</keyword>
<keyword id="KW-0460">Magnesium</keyword>
<keyword id="KW-0479">Metal-binding</keyword>
<keyword id="KW-0547">Nucleotide-binding</keyword>
<keyword id="KW-0648">Protein biosynthesis</keyword>
<keyword id="KW-1185">Reference proteome</keyword>
<keyword id="KW-0862">Zinc</keyword>
<evidence type="ECO:0000250" key="1">
    <source>
        <dbReference type="UniProtKB" id="Q980A5"/>
    </source>
</evidence>
<evidence type="ECO:0000255" key="2">
    <source>
        <dbReference type="HAMAP-Rule" id="MF_00119"/>
    </source>
</evidence>
<evidence type="ECO:0000269" key="3">
    <source>
    </source>
</evidence>
<evidence type="ECO:0000305" key="4"/>
<evidence type="ECO:0007744" key="5">
    <source>
        <dbReference type="PDB" id="1S0U"/>
    </source>
</evidence>
<evidence type="ECO:0007829" key="6">
    <source>
        <dbReference type="PDB" id="1S0U"/>
    </source>
</evidence>
<proteinExistence type="evidence at protein level"/>